<dbReference type="EC" id="6.1.1.12" evidence="1"/>
<dbReference type="EMBL" id="CP001011">
    <property type="protein sequence ID" value="ACB92430.1"/>
    <property type="molecule type" value="Genomic_DNA"/>
</dbReference>
<dbReference type="RefSeq" id="WP_004089732.1">
    <property type="nucleotide sequence ID" value="NC_010577.1"/>
</dbReference>
<dbReference type="SMR" id="B2I4Y5"/>
<dbReference type="GeneID" id="93904724"/>
<dbReference type="KEGG" id="xfn:XfasM23_0999"/>
<dbReference type="HOGENOM" id="CLU_014330_3_2_6"/>
<dbReference type="Proteomes" id="UP000001698">
    <property type="component" value="Chromosome"/>
</dbReference>
<dbReference type="GO" id="GO:0005737">
    <property type="term" value="C:cytoplasm"/>
    <property type="evidence" value="ECO:0007669"/>
    <property type="project" value="UniProtKB-SubCell"/>
</dbReference>
<dbReference type="GO" id="GO:0004815">
    <property type="term" value="F:aspartate-tRNA ligase activity"/>
    <property type="evidence" value="ECO:0007669"/>
    <property type="project" value="UniProtKB-UniRule"/>
</dbReference>
<dbReference type="GO" id="GO:0005524">
    <property type="term" value="F:ATP binding"/>
    <property type="evidence" value="ECO:0007669"/>
    <property type="project" value="UniProtKB-UniRule"/>
</dbReference>
<dbReference type="GO" id="GO:0003676">
    <property type="term" value="F:nucleic acid binding"/>
    <property type="evidence" value="ECO:0007669"/>
    <property type="project" value="InterPro"/>
</dbReference>
<dbReference type="GO" id="GO:0006422">
    <property type="term" value="P:aspartyl-tRNA aminoacylation"/>
    <property type="evidence" value="ECO:0007669"/>
    <property type="project" value="UniProtKB-UniRule"/>
</dbReference>
<dbReference type="CDD" id="cd00777">
    <property type="entry name" value="AspRS_core"/>
    <property type="match status" value="1"/>
</dbReference>
<dbReference type="CDD" id="cd04317">
    <property type="entry name" value="EcAspRS_like_N"/>
    <property type="match status" value="1"/>
</dbReference>
<dbReference type="Gene3D" id="3.30.930.10">
    <property type="entry name" value="Bira Bifunctional Protein, Domain 2"/>
    <property type="match status" value="1"/>
</dbReference>
<dbReference type="Gene3D" id="3.30.1360.30">
    <property type="entry name" value="GAD-like domain"/>
    <property type="match status" value="1"/>
</dbReference>
<dbReference type="Gene3D" id="2.40.50.140">
    <property type="entry name" value="Nucleic acid-binding proteins"/>
    <property type="match status" value="1"/>
</dbReference>
<dbReference type="HAMAP" id="MF_00044">
    <property type="entry name" value="Asp_tRNA_synth_type1"/>
    <property type="match status" value="1"/>
</dbReference>
<dbReference type="InterPro" id="IPR004364">
    <property type="entry name" value="Aa-tRNA-synt_II"/>
</dbReference>
<dbReference type="InterPro" id="IPR006195">
    <property type="entry name" value="aa-tRNA-synth_II"/>
</dbReference>
<dbReference type="InterPro" id="IPR045864">
    <property type="entry name" value="aa-tRNA-synth_II/BPL/LPL"/>
</dbReference>
<dbReference type="InterPro" id="IPR004524">
    <property type="entry name" value="Asp-tRNA-ligase_1"/>
</dbReference>
<dbReference type="InterPro" id="IPR047089">
    <property type="entry name" value="Asp-tRNA-ligase_1_N"/>
</dbReference>
<dbReference type="InterPro" id="IPR002312">
    <property type="entry name" value="Asp/Asn-tRNA-synth_IIb"/>
</dbReference>
<dbReference type="InterPro" id="IPR047090">
    <property type="entry name" value="AspRS_core"/>
</dbReference>
<dbReference type="InterPro" id="IPR004115">
    <property type="entry name" value="GAD-like_sf"/>
</dbReference>
<dbReference type="InterPro" id="IPR029351">
    <property type="entry name" value="GAD_dom"/>
</dbReference>
<dbReference type="InterPro" id="IPR012340">
    <property type="entry name" value="NA-bd_OB-fold"/>
</dbReference>
<dbReference type="InterPro" id="IPR004365">
    <property type="entry name" value="NA-bd_OB_tRNA"/>
</dbReference>
<dbReference type="NCBIfam" id="TIGR00459">
    <property type="entry name" value="aspS_bact"/>
    <property type="match status" value="1"/>
</dbReference>
<dbReference type="NCBIfam" id="NF001750">
    <property type="entry name" value="PRK00476.1"/>
    <property type="match status" value="1"/>
</dbReference>
<dbReference type="PANTHER" id="PTHR22594:SF5">
    <property type="entry name" value="ASPARTATE--TRNA LIGASE, MITOCHONDRIAL"/>
    <property type="match status" value="1"/>
</dbReference>
<dbReference type="PANTHER" id="PTHR22594">
    <property type="entry name" value="ASPARTYL/LYSYL-TRNA SYNTHETASE"/>
    <property type="match status" value="1"/>
</dbReference>
<dbReference type="Pfam" id="PF02938">
    <property type="entry name" value="GAD"/>
    <property type="match status" value="1"/>
</dbReference>
<dbReference type="Pfam" id="PF00152">
    <property type="entry name" value="tRNA-synt_2"/>
    <property type="match status" value="1"/>
</dbReference>
<dbReference type="Pfam" id="PF01336">
    <property type="entry name" value="tRNA_anti-codon"/>
    <property type="match status" value="1"/>
</dbReference>
<dbReference type="PRINTS" id="PR01042">
    <property type="entry name" value="TRNASYNTHASP"/>
</dbReference>
<dbReference type="SUPFAM" id="SSF55681">
    <property type="entry name" value="Class II aaRS and biotin synthetases"/>
    <property type="match status" value="1"/>
</dbReference>
<dbReference type="SUPFAM" id="SSF55261">
    <property type="entry name" value="GAD domain-like"/>
    <property type="match status" value="1"/>
</dbReference>
<dbReference type="SUPFAM" id="SSF50249">
    <property type="entry name" value="Nucleic acid-binding proteins"/>
    <property type="match status" value="1"/>
</dbReference>
<dbReference type="PROSITE" id="PS50862">
    <property type="entry name" value="AA_TRNA_LIGASE_II"/>
    <property type="match status" value="1"/>
</dbReference>
<organism>
    <name type="scientific">Xylella fastidiosa (strain M23)</name>
    <dbReference type="NCBI Taxonomy" id="405441"/>
    <lineage>
        <taxon>Bacteria</taxon>
        <taxon>Pseudomonadati</taxon>
        <taxon>Pseudomonadota</taxon>
        <taxon>Gammaproteobacteria</taxon>
        <taxon>Lysobacterales</taxon>
        <taxon>Lysobacteraceae</taxon>
        <taxon>Xylella</taxon>
    </lineage>
</organism>
<feature type="chain" id="PRO_1000091064" description="Aspartate--tRNA ligase">
    <location>
        <begin position="1"/>
        <end position="589"/>
    </location>
</feature>
<feature type="region of interest" description="Aspartate" evidence="1">
    <location>
        <begin position="198"/>
        <end position="201"/>
    </location>
</feature>
<feature type="binding site" evidence="1">
    <location>
        <position position="174"/>
    </location>
    <ligand>
        <name>L-aspartate</name>
        <dbReference type="ChEBI" id="CHEBI:29991"/>
    </ligand>
</feature>
<feature type="binding site" evidence="1">
    <location>
        <begin position="220"/>
        <end position="222"/>
    </location>
    <ligand>
        <name>ATP</name>
        <dbReference type="ChEBI" id="CHEBI:30616"/>
    </ligand>
</feature>
<feature type="binding site" evidence="1">
    <location>
        <position position="220"/>
    </location>
    <ligand>
        <name>L-aspartate</name>
        <dbReference type="ChEBI" id="CHEBI:29991"/>
    </ligand>
</feature>
<feature type="binding site" evidence="1">
    <location>
        <position position="229"/>
    </location>
    <ligand>
        <name>ATP</name>
        <dbReference type="ChEBI" id="CHEBI:30616"/>
    </ligand>
</feature>
<feature type="binding site" evidence="1">
    <location>
        <position position="448"/>
    </location>
    <ligand>
        <name>L-aspartate</name>
        <dbReference type="ChEBI" id="CHEBI:29991"/>
    </ligand>
</feature>
<feature type="binding site" evidence="1">
    <location>
        <position position="483"/>
    </location>
    <ligand>
        <name>ATP</name>
        <dbReference type="ChEBI" id="CHEBI:30616"/>
    </ligand>
</feature>
<feature type="binding site" evidence="1">
    <location>
        <position position="490"/>
    </location>
    <ligand>
        <name>L-aspartate</name>
        <dbReference type="ChEBI" id="CHEBI:29991"/>
    </ligand>
</feature>
<feature type="binding site" evidence="1">
    <location>
        <begin position="535"/>
        <end position="538"/>
    </location>
    <ligand>
        <name>ATP</name>
        <dbReference type="ChEBI" id="CHEBI:30616"/>
    </ligand>
</feature>
<reference key="1">
    <citation type="journal article" date="2010" name="J. Bacteriol.">
        <title>Whole genome sequences of two Xylella fastidiosa strains (M12 and M23) causing almond leaf scorch disease in California.</title>
        <authorList>
            <person name="Chen J."/>
            <person name="Xie G."/>
            <person name="Han S."/>
            <person name="Chertkov O."/>
            <person name="Sims D."/>
            <person name="Civerolo E.L."/>
        </authorList>
    </citation>
    <scope>NUCLEOTIDE SEQUENCE [LARGE SCALE GENOMIC DNA]</scope>
    <source>
        <strain>M23</strain>
    </source>
</reference>
<comment type="function">
    <text evidence="1">Catalyzes the attachment of L-aspartate to tRNA(Asp) in a two-step reaction: L-aspartate is first activated by ATP to form Asp-AMP and then transferred to the acceptor end of tRNA(Asp).</text>
</comment>
<comment type="catalytic activity">
    <reaction evidence="1">
        <text>tRNA(Asp) + L-aspartate + ATP = L-aspartyl-tRNA(Asp) + AMP + diphosphate</text>
        <dbReference type="Rhea" id="RHEA:19649"/>
        <dbReference type="Rhea" id="RHEA-COMP:9660"/>
        <dbReference type="Rhea" id="RHEA-COMP:9678"/>
        <dbReference type="ChEBI" id="CHEBI:29991"/>
        <dbReference type="ChEBI" id="CHEBI:30616"/>
        <dbReference type="ChEBI" id="CHEBI:33019"/>
        <dbReference type="ChEBI" id="CHEBI:78442"/>
        <dbReference type="ChEBI" id="CHEBI:78516"/>
        <dbReference type="ChEBI" id="CHEBI:456215"/>
        <dbReference type="EC" id="6.1.1.12"/>
    </reaction>
</comment>
<comment type="subunit">
    <text evidence="1">Homodimer.</text>
</comment>
<comment type="subcellular location">
    <subcellularLocation>
        <location evidence="1">Cytoplasm</location>
    </subcellularLocation>
</comment>
<comment type="similarity">
    <text evidence="1">Belongs to the class-II aminoacyl-tRNA synthetase family. Type 1 subfamily.</text>
</comment>
<proteinExistence type="inferred from homology"/>
<evidence type="ECO:0000255" key="1">
    <source>
        <dbReference type="HAMAP-Rule" id="MF_00044"/>
    </source>
</evidence>
<sequence length="589" mass="66041">MRTHFCGLINETLIGHTVTLAGWTDVARNLGGVCFIDLRDHEGIVQITVDSRAIDQNNSELFRVASGLSYEDVLQVEGVVHARHAVNDKIKTGKVEVIATKIKILNKAAPLPFHAHENPGEDIRLKYRYLDLRRPEMQRMQRTRIKLVQALRRHLDMHGFQDIETPILTKATPEGARDFLVPARMHPGEFYALPQSPQLFKQILMVAGFDRYYQIARCFRDEALRADRQLEFTQLDMEFAFVSERDVQDFVEEMIRRVFKEVAGIELDTTFPRMTWKEAMRRFGSDKPDMRINLELIDVAALVADSTFTPFTNAVAHPNGRVAALRIPRGAVLSRKQIDEYAAYTAKYGATGLAYAKLAPTGEITSPIAKFFSEDAFAALLSHIGAEKGDIVFFGAGNYNKVSDFMGALRLKAGKDFALITADWRPLWVTDFPMFEWDEEAQRYVALHHPFTAPAAINDIDELRTHARTALSRGYDMVLNGNEIGGGSIRIHRPEMQRAVFELLGITEDEARAKFGFLLDALNYGAPPHGGIAFGIDRIAALIAGTESIRDVIPFPKTTGAQCLMTDAPSPISEEQLSEIHVITKKLTP</sequence>
<keyword id="KW-0030">Aminoacyl-tRNA synthetase</keyword>
<keyword id="KW-0067">ATP-binding</keyword>
<keyword id="KW-0963">Cytoplasm</keyword>
<keyword id="KW-0436">Ligase</keyword>
<keyword id="KW-0547">Nucleotide-binding</keyword>
<keyword id="KW-0648">Protein biosynthesis</keyword>
<protein>
    <recommendedName>
        <fullName evidence="1">Aspartate--tRNA ligase</fullName>
        <ecNumber evidence="1">6.1.1.12</ecNumber>
    </recommendedName>
    <alternativeName>
        <fullName evidence="1">Aspartyl-tRNA synthetase</fullName>
        <shortName evidence="1">AspRS</shortName>
    </alternativeName>
</protein>
<accession>B2I4Y5</accession>
<gene>
    <name evidence="1" type="primary">aspS</name>
    <name type="ordered locus">XfasM23_0999</name>
</gene>
<name>SYD_XYLF2</name>